<keyword id="KW-0488">Methylation</keyword>
<keyword id="KW-1185">Reference proteome</keyword>
<keyword id="KW-0687">Ribonucleoprotein</keyword>
<keyword id="KW-0689">Ribosomal protein</keyword>
<keyword id="KW-0694">RNA-binding</keyword>
<keyword id="KW-0699">rRNA-binding</keyword>
<keyword id="KW-0820">tRNA-binding</keyword>
<dbReference type="EMBL" id="CP000769">
    <property type="protein sequence ID" value="ABS26110.1"/>
    <property type="molecule type" value="Genomic_DNA"/>
</dbReference>
<dbReference type="RefSeq" id="WP_012096689.1">
    <property type="nucleotide sequence ID" value="NC_009675.1"/>
</dbReference>
<dbReference type="SMR" id="A7HBL4"/>
<dbReference type="STRING" id="404589.Anae109_1907"/>
<dbReference type="KEGG" id="afw:Anae109_1907"/>
<dbReference type="eggNOG" id="COG0048">
    <property type="taxonomic scope" value="Bacteria"/>
</dbReference>
<dbReference type="HOGENOM" id="CLU_104295_1_2_7"/>
<dbReference type="OrthoDB" id="9802366at2"/>
<dbReference type="Proteomes" id="UP000006382">
    <property type="component" value="Chromosome"/>
</dbReference>
<dbReference type="GO" id="GO:0015935">
    <property type="term" value="C:small ribosomal subunit"/>
    <property type="evidence" value="ECO:0007669"/>
    <property type="project" value="InterPro"/>
</dbReference>
<dbReference type="GO" id="GO:0019843">
    <property type="term" value="F:rRNA binding"/>
    <property type="evidence" value="ECO:0007669"/>
    <property type="project" value="UniProtKB-UniRule"/>
</dbReference>
<dbReference type="GO" id="GO:0003735">
    <property type="term" value="F:structural constituent of ribosome"/>
    <property type="evidence" value="ECO:0007669"/>
    <property type="project" value="InterPro"/>
</dbReference>
<dbReference type="GO" id="GO:0000049">
    <property type="term" value="F:tRNA binding"/>
    <property type="evidence" value="ECO:0007669"/>
    <property type="project" value="UniProtKB-UniRule"/>
</dbReference>
<dbReference type="GO" id="GO:0006412">
    <property type="term" value="P:translation"/>
    <property type="evidence" value="ECO:0007669"/>
    <property type="project" value="UniProtKB-UniRule"/>
</dbReference>
<dbReference type="CDD" id="cd03368">
    <property type="entry name" value="Ribosomal_S12"/>
    <property type="match status" value="1"/>
</dbReference>
<dbReference type="FunFam" id="2.40.50.140:FF:000001">
    <property type="entry name" value="30S ribosomal protein S12"/>
    <property type="match status" value="1"/>
</dbReference>
<dbReference type="Gene3D" id="2.40.50.140">
    <property type="entry name" value="Nucleic acid-binding proteins"/>
    <property type="match status" value="1"/>
</dbReference>
<dbReference type="HAMAP" id="MF_00403_B">
    <property type="entry name" value="Ribosomal_uS12_B"/>
    <property type="match status" value="1"/>
</dbReference>
<dbReference type="InterPro" id="IPR012340">
    <property type="entry name" value="NA-bd_OB-fold"/>
</dbReference>
<dbReference type="InterPro" id="IPR006032">
    <property type="entry name" value="Ribosomal_uS12"/>
</dbReference>
<dbReference type="InterPro" id="IPR005679">
    <property type="entry name" value="Ribosomal_uS12_bac"/>
</dbReference>
<dbReference type="NCBIfam" id="TIGR00981">
    <property type="entry name" value="rpsL_bact"/>
    <property type="match status" value="1"/>
</dbReference>
<dbReference type="PANTHER" id="PTHR11652">
    <property type="entry name" value="30S RIBOSOMAL PROTEIN S12 FAMILY MEMBER"/>
    <property type="match status" value="1"/>
</dbReference>
<dbReference type="Pfam" id="PF00164">
    <property type="entry name" value="Ribosom_S12_S23"/>
    <property type="match status" value="1"/>
</dbReference>
<dbReference type="PIRSF" id="PIRSF002133">
    <property type="entry name" value="Ribosomal_S12/S23"/>
    <property type="match status" value="1"/>
</dbReference>
<dbReference type="PRINTS" id="PR01034">
    <property type="entry name" value="RIBOSOMALS12"/>
</dbReference>
<dbReference type="SUPFAM" id="SSF50249">
    <property type="entry name" value="Nucleic acid-binding proteins"/>
    <property type="match status" value="1"/>
</dbReference>
<dbReference type="PROSITE" id="PS00055">
    <property type="entry name" value="RIBOSOMAL_S12"/>
    <property type="match status" value="1"/>
</dbReference>
<comment type="function">
    <text evidence="2">With S4 and S5 plays an important role in translational accuracy.</text>
</comment>
<comment type="function">
    <text evidence="2">Interacts with and stabilizes bases of the 16S rRNA that are involved in tRNA selection in the A site and with the mRNA backbone. Located at the interface of the 30S and 50S subunits, it traverses the body of the 30S subunit contacting proteins on the other side and probably holding the rRNA structure together. The combined cluster of proteins S8, S12 and S17 appears to hold together the shoulder and platform of the 30S subunit.</text>
</comment>
<comment type="subunit">
    <text evidence="2">Part of the 30S ribosomal subunit. Contacts proteins S8 and S17. May interact with IF1 in the 30S initiation complex.</text>
</comment>
<comment type="similarity">
    <text evidence="2">Belongs to the universal ribosomal protein uS12 family.</text>
</comment>
<protein>
    <recommendedName>
        <fullName evidence="2">Small ribosomal subunit protein uS12</fullName>
    </recommendedName>
    <alternativeName>
        <fullName evidence="3">30S ribosomal protein S12</fullName>
    </alternativeName>
</protein>
<accession>A7HBL4</accession>
<proteinExistence type="inferred from homology"/>
<reference key="1">
    <citation type="journal article" date="2015" name="Genome Announc.">
        <title>Complete genome sequence of Anaeromyxobacter sp. Fw109-5, an anaerobic, metal-reducing bacterium isolated from a contaminated subsurface environment.</title>
        <authorList>
            <person name="Hwang C."/>
            <person name="Copeland A."/>
            <person name="Lucas S."/>
            <person name="Lapidus A."/>
            <person name="Barry K."/>
            <person name="Glavina Del Rio T."/>
            <person name="Dalin E."/>
            <person name="Tice H."/>
            <person name="Pitluck S."/>
            <person name="Sims D."/>
            <person name="Brettin T."/>
            <person name="Bruce D.C."/>
            <person name="Detter J.C."/>
            <person name="Han C.S."/>
            <person name="Schmutz J."/>
            <person name="Larimer F.W."/>
            <person name="Land M.L."/>
            <person name="Hauser L.J."/>
            <person name="Kyrpides N."/>
            <person name="Lykidis A."/>
            <person name="Richardson P."/>
            <person name="Belieav A."/>
            <person name="Sanford R.A."/>
            <person name="Loeffler F.E."/>
            <person name="Fields M.W."/>
        </authorList>
    </citation>
    <scope>NUCLEOTIDE SEQUENCE [LARGE SCALE GENOMIC DNA]</scope>
    <source>
        <strain>Fw109-5</strain>
    </source>
</reference>
<sequence>MPTISQLVRKGREKLLTKKKAPALKESPQKRGVCTRVYTTTPKKPNSALRKVARVRLTNGFEVTSYIPGVGHNLQEHSVVLIRGGRVKDLPGVRYHIVRGTLDAVGVQGRKQGRSKYGAKRPS</sequence>
<name>RS12_ANADF</name>
<gene>
    <name evidence="2" type="primary">rpsL</name>
    <name type="ordered locus">Anae109_1907</name>
</gene>
<feature type="chain" id="PRO_1000049768" description="Small ribosomal subunit protein uS12">
    <location>
        <begin position="1"/>
        <end position="123"/>
    </location>
</feature>
<feature type="modified residue" description="3-methylthioaspartic acid" evidence="1">
    <location>
        <position position="89"/>
    </location>
</feature>
<organism>
    <name type="scientific">Anaeromyxobacter sp. (strain Fw109-5)</name>
    <dbReference type="NCBI Taxonomy" id="404589"/>
    <lineage>
        <taxon>Bacteria</taxon>
        <taxon>Pseudomonadati</taxon>
        <taxon>Myxococcota</taxon>
        <taxon>Myxococcia</taxon>
        <taxon>Myxococcales</taxon>
        <taxon>Cystobacterineae</taxon>
        <taxon>Anaeromyxobacteraceae</taxon>
        <taxon>Anaeromyxobacter</taxon>
    </lineage>
</organism>
<evidence type="ECO:0000250" key="1"/>
<evidence type="ECO:0000255" key="2">
    <source>
        <dbReference type="HAMAP-Rule" id="MF_00403"/>
    </source>
</evidence>
<evidence type="ECO:0000305" key="3"/>